<feature type="chain" id="PRO_0000425125" description="Chorismate dehydratase">
    <location>
        <begin position="1"/>
        <end position="223"/>
    </location>
</feature>
<evidence type="ECO:0000255" key="1">
    <source>
        <dbReference type="HAMAP-Rule" id="MF_00995"/>
    </source>
</evidence>
<evidence type="ECO:0000269" key="2">
    <source>
    </source>
</evidence>
<dbReference type="EC" id="4.2.1.151" evidence="1"/>
<dbReference type="EMBL" id="CP000538">
    <property type="protein sequence ID" value="EAQ72714.1"/>
    <property type="molecule type" value="Genomic_DNA"/>
</dbReference>
<dbReference type="RefSeq" id="WP_002854065.1">
    <property type="nucleotide sequence ID" value="NC_008787.1"/>
</dbReference>
<dbReference type="SMR" id="A1W0R9"/>
<dbReference type="KEGG" id="cjj:CJJ81176_1302"/>
<dbReference type="eggNOG" id="COG1427">
    <property type="taxonomic scope" value="Bacteria"/>
</dbReference>
<dbReference type="HOGENOM" id="CLU_059898_1_0_7"/>
<dbReference type="UniPathway" id="UPA00079"/>
<dbReference type="Proteomes" id="UP000000646">
    <property type="component" value="Chromosome"/>
</dbReference>
<dbReference type="GO" id="GO:0016836">
    <property type="term" value="F:hydro-lyase activity"/>
    <property type="evidence" value="ECO:0007669"/>
    <property type="project" value="UniProtKB-UniRule"/>
</dbReference>
<dbReference type="GO" id="GO:0009234">
    <property type="term" value="P:menaquinone biosynthetic process"/>
    <property type="evidence" value="ECO:0007669"/>
    <property type="project" value="UniProtKB-UniRule"/>
</dbReference>
<dbReference type="Gene3D" id="3.40.190.10">
    <property type="entry name" value="Periplasmic binding protein-like II"/>
    <property type="match status" value="2"/>
</dbReference>
<dbReference type="HAMAP" id="MF_00995">
    <property type="entry name" value="MqnA"/>
    <property type="match status" value="1"/>
</dbReference>
<dbReference type="InterPro" id="IPR003773">
    <property type="entry name" value="Menaquinone_biosynth"/>
</dbReference>
<dbReference type="InterPro" id="IPR030868">
    <property type="entry name" value="MqnA"/>
</dbReference>
<dbReference type="PANTHER" id="PTHR37690">
    <property type="entry name" value="CHORISMATE DEHYDRATASE"/>
    <property type="match status" value="1"/>
</dbReference>
<dbReference type="PANTHER" id="PTHR37690:SF1">
    <property type="entry name" value="CHORISMATE DEHYDRATASE"/>
    <property type="match status" value="1"/>
</dbReference>
<dbReference type="Pfam" id="PF02621">
    <property type="entry name" value="VitK2_biosynth"/>
    <property type="match status" value="1"/>
</dbReference>
<dbReference type="SUPFAM" id="SSF53850">
    <property type="entry name" value="Periplasmic binding protein-like II"/>
    <property type="match status" value="1"/>
</dbReference>
<proteinExistence type="inferred from homology"/>
<accession>A1W0R9</accession>
<protein>
    <recommendedName>
        <fullName evidence="1">Chorismate dehydratase</fullName>
        <ecNumber evidence="1">4.2.1.151</ecNumber>
    </recommendedName>
    <alternativeName>
        <fullName evidence="1">Menaquinone biosynthetic enzyme MqnA</fullName>
    </alternativeName>
</protein>
<sequence>MIFGKIDYINLLPLHIYLKKYPLPNGYKANMEYKKGVPSKLNKDLFYRRIDAAIISSIESARKKYKNLDLGICANKRVLSVLVEKNTSNAKDPSSATSNALAKVLKQDGKVIIGDKALKLYLKDPSKYIDLCAKWHEKTGLPFVFARFSCVQKKALYKQILKKFPKTKIKIPYYILQNYAKTRDLDIKDVRYYLDEVIYHKISTKEKTALKRFVKACKALNLA</sequence>
<gene>
    <name evidence="1" type="primary">mqnA</name>
    <name type="synonym">mqnA2</name>
    <name type="ordered locus">CJJ81176_1302</name>
</gene>
<organism>
    <name type="scientific">Campylobacter jejuni subsp. jejuni serotype O:23/36 (strain 81-176)</name>
    <dbReference type="NCBI Taxonomy" id="354242"/>
    <lineage>
        <taxon>Bacteria</taxon>
        <taxon>Pseudomonadati</taxon>
        <taxon>Campylobacterota</taxon>
        <taxon>Epsilonproteobacteria</taxon>
        <taxon>Campylobacterales</taxon>
        <taxon>Campylobacteraceae</taxon>
        <taxon>Campylobacter</taxon>
    </lineage>
</organism>
<name>MQNA_CAMJJ</name>
<keyword id="KW-0456">Lyase</keyword>
<keyword id="KW-0474">Menaquinone biosynthesis</keyword>
<reference key="1">
    <citation type="submission" date="2006-12" db="EMBL/GenBank/DDBJ databases">
        <authorList>
            <person name="Fouts D.E."/>
            <person name="Nelson K.E."/>
            <person name="Sebastian Y."/>
        </authorList>
    </citation>
    <scope>NUCLEOTIDE SEQUENCE [LARGE SCALE GENOMIC DNA]</scope>
    <source>
        <strain>81-176</strain>
    </source>
</reference>
<reference key="2">
    <citation type="journal article" date="2011" name="J. Biol. Chem.">
        <title>5'-methylthioadenosine nucleosidase is implicated in playing a key role in a modified futalosine pathway for menaquinone biosynthesis in Campylobacter jejuni.</title>
        <authorList>
            <person name="Li X."/>
            <person name="Apel D."/>
            <person name="Gaynor E.C."/>
            <person name="Tanner M.E."/>
        </authorList>
    </citation>
    <scope>DISRUPTION PHENOTYPE</scope>
    <scope>ROLE IN MENAQUINONE BIOSYNTHESIS</scope>
    <scope>PATHWAY</scope>
    <source>
        <strain>NCTC 11168</strain>
    </source>
</reference>
<comment type="function">
    <text evidence="1">Catalyzes the dehydration of chorismate into 3-[(1-carboxyvinyl)oxy]benzoate, a step in the biosynthesis of menaquinone (MK, vitamin K2).</text>
</comment>
<comment type="catalytic activity">
    <reaction evidence="1">
        <text>chorismate = 3-[(1-carboxyvinyl)-oxy]benzoate + H2O</text>
        <dbReference type="Rhea" id="RHEA:40051"/>
        <dbReference type="ChEBI" id="CHEBI:15377"/>
        <dbReference type="ChEBI" id="CHEBI:29748"/>
        <dbReference type="ChEBI" id="CHEBI:76981"/>
        <dbReference type="EC" id="4.2.1.151"/>
    </reaction>
</comment>
<comment type="pathway">
    <text evidence="1 2">Quinol/quinone metabolism; menaquinone biosynthesis.</text>
</comment>
<comment type="disruption phenotype">
    <text evidence="2">Cells lacking this gene do not grow on standard rich medium; however, growth of these mutants is readily rescued by the addition of aminodeoxyfutalosine, but not futalosine.</text>
</comment>
<comment type="similarity">
    <text evidence="1">Belongs to the MqnA/MqnD family. MqnA subfamily.</text>
</comment>